<gene>
    <name evidence="1" type="primary">slmA</name>
    <name type="ordered locus">SPA3584</name>
</gene>
<comment type="function">
    <text evidence="1">Required for nucleoid occlusion (NO) phenomenon, which prevents Z-ring formation and cell division over the nucleoid. Acts as a DNA-associated cell division inhibitor that binds simultaneously chromosomal DNA and FtsZ, and disrupts the assembly of FtsZ polymers. SlmA-DNA-binding sequences (SBS) are dispersed on non-Ter regions of the chromosome, preventing FtsZ polymerization at these regions.</text>
</comment>
<comment type="subunit">
    <text evidence="1">Homodimer. Interacts with FtsZ.</text>
</comment>
<comment type="subcellular location">
    <subcellularLocation>
        <location evidence="1">Cytoplasm</location>
        <location evidence="1">Nucleoid</location>
    </subcellularLocation>
</comment>
<comment type="similarity">
    <text evidence="1">Belongs to the nucleoid occlusion factor SlmA family.</text>
</comment>
<sequence length="198" mass="22865">MAEKQTAKRNRREEILQSLALMLESSDGSQRITTAKLAASVGVSEAALYRHFPSKTRMFDSLIEFIEDSLITRINLILKDEKDTSTRLRLIVLLILGFGERNPGLTRILTGHALMFEQDRLQGRINQLFERIEAQLRQVLREKRMREGEGYTTDENLLASQLLAFCEGMLSRFVRSEFKYRPTDDFDARWPLIAAQLQ</sequence>
<dbReference type="EMBL" id="CP000026">
    <property type="protein sequence ID" value="AAV79385.1"/>
    <property type="molecule type" value="Genomic_DNA"/>
</dbReference>
<dbReference type="RefSeq" id="WP_000818595.1">
    <property type="nucleotide sequence ID" value="NC_006511.1"/>
</dbReference>
<dbReference type="SMR" id="Q5PC27"/>
<dbReference type="KEGG" id="spt:SPA3584"/>
<dbReference type="HOGENOM" id="CLU_069356_5_0_6"/>
<dbReference type="Proteomes" id="UP000008185">
    <property type="component" value="Chromosome"/>
</dbReference>
<dbReference type="GO" id="GO:0043590">
    <property type="term" value="C:bacterial nucleoid"/>
    <property type="evidence" value="ECO:0007669"/>
    <property type="project" value="UniProtKB-UniRule"/>
</dbReference>
<dbReference type="GO" id="GO:0005737">
    <property type="term" value="C:cytoplasm"/>
    <property type="evidence" value="ECO:0007669"/>
    <property type="project" value="UniProtKB-UniRule"/>
</dbReference>
<dbReference type="GO" id="GO:0003700">
    <property type="term" value="F:DNA-binding transcription factor activity"/>
    <property type="evidence" value="ECO:0007669"/>
    <property type="project" value="TreeGrafter"/>
</dbReference>
<dbReference type="GO" id="GO:0000976">
    <property type="term" value="F:transcription cis-regulatory region binding"/>
    <property type="evidence" value="ECO:0007669"/>
    <property type="project" value="TreeGrafter"/>
</dbReference>
<dbReference type="GO" id="GO:0051301">
    <property type="term" value="P:cell division"/>
    <property type="evidence" value="ECO:0007669"/>
    <property type="project" value="UniProtKB-KW"/>
</dbReference>
<dbReference type="GO" id="GO:0010974">
    <property type="term" value="P:negative regulation of division septum assembly"/>
    <property type="evidence" value="ECO:0007669"/>
    <property type="project" value="InterPro"/>
</dbReference>
<dbReference type="FunFam" id="1.10.357.10:FF:000002">
    <property type="entry name" value="Nucleoid occlusion factor SlmA"/>
    <property type="match status" value="1"/>
</dbReference>
<dbReference type="Gene3D" id="1.10.357.10">
    <property type="entry name" value="Tetracycline Repressor, domain 2"/>
    <property type="match status" value="1"/>
</dbReference>
<dbReference type="HAMAP" id="MF_01839">
    <property type="entry name" value="NO_factor_SlmA"/>
    <property type="match status" value="1"/>
</dbReference>
<dbReference type="InterPro" id="IPR023772">
    <property type="entry name" value="DNA-bd_HTH_TetR-type_CS"/>
</dbReference>
<dbReference type="InterPro" id="IPR009057">
    <property type="entry name" value="Homeodomain-like_sf"/>
</dbReference>
<dbReference type="InterPro" id="IPR050109">
    <property type="entry name" value="HTH-type_TetR-like_transc_reg"/>
</dbReference>
<dbReference type="InterPro" id="IPR001647">
    <property type="entry name" value="HTH_TetR"/>
</dbReference>
<dbReference type="InterPro" id="IPR023769">
    <property type="entry name" value="NO_SlmA"/>
</dbReference>
<dbReference type="InterPro" id="IPR054580">
    <property type="entry name" value="SlmA-like_C"/>
</dbReference>
<dbReference type="InterPro" id="IPR036271">
    <property type="entry name" value="Tet_transcr_reg_TetR-rel_C_sf"/>
</dbReference>
<dbReference type="NCBIfam" id="NF007015">
    <property type="entry name" value="PRK09480.1"/>
    <property type="match status" value="1"/>
</dbReference>
<dbReference type="PANTHER" id="PTHR30055">
    <property type="entry name" value="HTH-TYPE TRANSCRIPTIONAL REGULATOR RUTR"/>
    <property type="match status" value="1"/>
</dbReference>
<dbReference type="PANTHER" id="PTHR30055:SF183">
    <property type="entry name" value="NUCLEOID OCCLUSION FACTOR SLMA"/>
    <property type="match status" value="1"/>
</dbReference>
<dbReference type="Pfam" id="PF22276">
    <property type="entry name" value="SlmA-like_C"/>
    <property type="match status" value="1"/>
</dbReference>
<dbReference type="Pfam" id="PF00440">
    <property type="entry name" value="TetR_N"/>
    <property type="match status" value="1"/>
</dbReference>
<dbReference type="SUPFAM" id="SSF46689">
    <property type="entry name" value="Homeodomain-like"/>
    <property type="match status" value="1"/>
</dbReference>
<dbReference type="SUPFAM" id="SSF48498">
    <property type="entry name" value="Tetracyclin repressor-like, C-terminal domain"/>
    <property type="match status" value="1"/>
</dbReference>
<dbReference type="PROSITE" id="PS01081">
    <property type="entry name" value="HTH_TETR_1"/>
    <property type="match status" value="1"/>
</dbReference>
<dbReference type="PROSITE" id="PS50977">
    <property type="entry name" value="HTH_TETR_2"/>
    <property type="match status" value="1"/>
</dbReference>
<organism>
    <name type="scientific">Salmonella paratyphi A (strain ATCC 9150 / SARB42)</name>
    <dbReference type="NCBI Taxonomy" id="295319"/>
    <lineage>
        <taxon>Bacteria</taxon>
        <taxon>Pseudomonadati</taxon>
        <taxon>Pseudomonadota</taxon>
        <taxon>Gammaproteobacteria</taxon>
        <taxon>Enterobacterales</taxon>
        <taxon>Enterobacteriaceae</taxon>
        <taxon>Salmonella</taxon>
    </lineage>
</organism>
<evidence type="ECO:0000255" key="1">
    <source>
        <dbReference type="HAMAP-Rule" id="MF_01839"/>
    </source>
</evidence>
<reference key="1">
    <citation type="journal article" date="2004" name="Nat. Genet.">
        <title>Comparison of genome degradation in Paratyphi A and Typhi, human-restricted serovars of Salmonella enterica that cause typhoid.</title>
        <authorList>
            <person name="McClelland M."/>
            <person name="Sanderson K.E."/>
            <person name="Clifton S.W."/>
            <person name="Latreille P."/>
            <person name="Porwollik S."/>
            <person name="Sabo A."/>
            <person name="Meyer R."/>
            <person name="Bieri T."/>
            <person name="Ozersky P."/>
            <person name="McLellan M."/>
            <person name="Harkins C.R."/>
            <person name="Wang C."/>
            <person name="Nguyen C."/>
            <person name="Berghoff A."/>
            <person name="Elliott G."/>
            <person name="Kohlberg S."/>
            <person name="Strong C."/>
            <person name="Du F."/>
            <person name="Carter J."/>
            <person name="Kremizki C."/>
            <person name="Layman D."/>
            <person name="Leonard S."/>
            <person name="Sun H."/>
            <person name="Fulton L."/>
            <person name="Nash W."/>
            <person name="Miner T."/>
            <person name="Minx P."/>
            <person name="Delehaunty K."/>
            <person name="Fronick C."/>
            <person name="Magrini V."/>
            <person name="Nhan M."/>
            <person name="Warren W."/>
            <person name="Florea L."/>
            <person name="Spieth J."/>
            <person name="Wilson R.K."/>
        </authorList>
    </citation>
    <scope>NUCLEOTIDE SEQUENCE [LARGE SCALE GENOMIC DNA]</scope>
    <source>
        <strain>ATCC 9150 / SARB42</strain>
    </source>
</reference>
<proteinExistence type="inferred from homology"/>
<accession>Q5PC27</accession>
<keyword id="KW-0131">Cell cycle</keyword>
<keyword id="KW-0132">Cell division</keyword>
<keyword id="KW-0175">Coiled coil</keyword>
<keyword id="KW-0963">Cytoplasm</keyword>
<keyword id="KW-0238">DNA-binding</keyword>
<name>SLMA_SALPA</name>
<feature type="chain" id="PRO_0000198978" description="Nucleoid occlusion factor SlmA">
    <location>
        <begin position="1"/>
        <end position="198"/>
    </location>
</feature>
<feature type="domain" description="HTH tetR-type" evidence="1">
    <location>
        <begin position="10"/>
        <end position="70"/>
    </location>
</feature>
<feature type="DNA-binding region" description="H-T-H motif" evidence="1">
    <location>
        <begin position="33"/>
        <end position="52"/>
    </location>
</feature>
<feature type="coiled-coil region" evidence="1">
    <location>
        <begin position="117"/>
        <end position="144"/>
    </location>
</feature>
<protein>
    <recommendedName>
        <fullName evidence="1">Nucleoid occlusion factor SlmA</fullName>
    </recommendedName>
</protein>